<feature type="chain" id="PRO_0000382539" description="UPF0397 protein SGO_0469">
    <location>
        <begin position="1"/>
        <end position="186"/>
    </location>
</feature>
<feature type="transmembrane region" description="Helical" evidence="1">
    <location>
        <begin position="14"/>
        <end position="34"/>
    </location>
</feature>
<feature type="transmembrane region" description="Helical" evidence="1">
    <location>
        <begin position="50"/>
        <end position="70"/>
    </location>
</feature>
<feature type="transmembrane region" description="Helical" evidence="1">
    <location>
        <begin position="77"/>
        <end position="97"/>
    </location>
</feature>
<feature type="transmembrane region" description="Helical" evidence="1">
    <location>
        <begin position="119"/>
        <end position="139"/>
    </location>
</feature>
<feature type="transmembrane region" description="Helical" evidence="1">
    <location>
        <begin position="152"/>
        <end position="172"/>
    </location>
</feature>
<organism>
    <name type="scientific">Streptococcus gordonii (strain Challis / ATCC 35105 / BCRC 15272 / CH1 / DL1 / V288)</name>
    <dbReference type="NCBI Taxonomy" id="467705"/>
    <lineage>
        <taxon>Bacteria</taxon>
        <taxon>Bacillati</taxon>
        <taxon>Bacillota</taxon>
        <taxon>Bacilli</taxon>
        <taxon>Lactobacillales</taxon>
        <taxon>Streptococcaceae</taxon>
        <taxon>Streptococcus</taxon>
    </lineage>
</organism>
<gene>
    <name type="ordered locus">SGO_0469</name>
</gene>
<accession>A8AVH5</accession>
<name>Y469_STRGC</name>
<evidence type="ECO:0000255" key="1">
    <source>
        <dbReference type="HAMAP-Rule" id="MF_01572"/>
    </source>
</evidence>
<comment type="subcellular location">
    <subcellularLocation>
        <location evidence="1">Cell membrane</location>
        <topology evidence="1">Multi-pass membrane protein</topology>
    </subcellularLocation>
</comment>
<comment type="similarity">
    <text evidence="1">Belongs to the UPF0397 family.</text>
</comment>
<reference key="1">
    <citation type="journal article" date="2007" name="J. Bacteriol.">
        <title>Genome-wide transcriptional changes in Streptococcus gordonii in response to competence signaling peptide.</title>
        <authorList>
            <person name="Vickerman M.M."/>
            <person name="Iobst S."/>
            <person name="Jesionowski A.M."/>
            <person name="Gill S.R."/>
        </authorList>
    </citation>
    <scope>NUCLEOTIDE SEQUENCE [LARGE SCALE GENOMIC DNA]</scope>
    <source>
        <strain>Challis / ATCC 35105 / BCRC 15272 / CH1 / DL1 / V288</strain>
    </source>
</reference>
<dbReference type="EMBL" id="CP000725">
    <property type="protein sequence ID" value="ABV10468.1"/>
    <property type="molecule type" value="Genomic_DNA"/>
</dbReference>
<dbReference type="RefSeq" id="WP_011999975.1">
    <property type="nucleotide sequence ID" value="NC_009785.1"/>
</dbReference>
<dbReference type="STRING" id="467705.SGO_0469"/>
<dbReference type="KEGG" id="sgo:SGO_0469"/>
<dbReference type="eggNOG" id="COG4720">
    <property type="taxonomic scope" value="Bacteria"/>
</dbReference>
<dbReference type="HOGENOM" id="CLU_120023_0_0_9"/>
<dbReference type="Proteomes" id="UP000001131">
    <property type="component" value="Chromosome"/>
</dbReference>
<dbReference type="GO" id="GO:0005886">
    <property type="term" value="C:plasma membrane"/>
    <property type="evidence" value="ECO:0007669"/>
    <property type="project" value="UniProtKB-SubCell"/>
</dbReference>
<dbReference type="Gene3D" id="1.10.1760.20">
    <property type="match status" value="1"/>
</dbReference>
<dbReference type="HAMAP" id="MF_01572">
    <property type="entry name" value="UPF0397"/>
    <property type="match status" value="1"/>
</dbReference>
<dbReference type="InterPro" id="IPR009825">
    <property type="entry name" value="ECF_substrate-spec-like"/>
</dbReference>
<dbReference type="InterPro" id="IPR022914">
    <property type="entry name" value="UPF0397"/>
</dbReference>
<dbReference type="NCBIfam" id="NF010182">
    <property type="entry name" value="PRK13661.1"/>
    <property type="match status" value="1"/>
</dbReference>
<dbReference type="PANTHER" id="PTHR37815">
    <property type="entry name" value="UPF0397 PROTEIN BC_2624-RELATED"/>
    <property type="match status" value="1"/>
</dbReference>
<dbReference type="PANTHER" id="PTHR37815:SF3">
    <property type="entry name" value="UPF0397 PROTEIN SPR0429"/>
    <property type="match status" value="1"/>
</dbReference>
<dbReference type="Pfam" id="PF07155">
    <property type="entry name" value="ECF-ribofla_trS"/>
    <property type="match status" value="1"/>
</dbReference>
<proteinExistence type="inferred from homology"/>
<keyword id="KW-1003">Cell membrane</keyword>
<keyword id="KW-0472">Membrane</keyword>
<keyword id="KW-1185">Reference proteome</keyword>
<keyword id="KW-0812">Transmembrane</keyword>
<keyword id="KW-1133">Transmembrane helix</keyword>
<protein>
    <recommendedName>
        <fullName evidence="1">UPF0397 protein SGO_0469</fullName>
    </recommendedName>
</protein>
<sequence length="186" mass="19861">MKKIFDTTFTIKEVVATGIGAALFVVIGMVSIPTPVPNTSIQLQYAVQALFGVVFGPIVGFLTGFIGHALKDSIQYGNPWWTWVLASGLFGLVVGLLKNYLRVAQGVFESRDIITFNVAQFVANALVWVVIAPLGDILIYNEPSNKVFAQGVVATVANGLTVAVAGTLLLIAYARTQTKSGSLKKD</sequence>